<accession>P28865</accession>
<accession>Q69060</accession>
<comment type="function">
    <text evidence="1">Plays an essential role in virion nuclear egress, the first step of virion release from infected cell. Within the host nucleus, NEC1 interacts with the newly formed capsid through the vertexes and directs it to the inner nuclear membrane by associating with NEC2. Induces the budding of the capsid at the inner nuclear membrane as well as its envelopment into the perinuclear space. There, the NEC1/NEC2 complex promotes the fusion of the enveloped capsid with the outer nuclear membrane and the subsequent release of the viral capsid into the cytoplasm where it will reach the secondary budding sites in the host Golgi or trans-Golgi network.</text>
</comment>
<comment type="subunit">
    <text evidence="1">Forms a heterohexameric complex with NEC2. Interacts with capsid vertex specific component 2/CVC2; this interaction directs the capsid to the host inner nuclear membrane to initiate budding.</text>
</comment>
<comment type="subcellular location">
    <subcellularLocation>
        <location evidence="1">Host nucleus inner membrane</location>
    </subcellularLocation>
    <text evidence="1">Remains attached to the nucleus inner membrane through interaction with NEC2.</text>
</comment>
<comment type="PTM">
    <text evidence="1">Phosphorylated at serine residues in the N-terminus. This phosphorylation regulates the localization within the inner nuclear membrane.</text>
</comment>
<comment type="similarity">
    <text evidence="1">Belongs to the herpesviridae NEC1 protein family.</text>
</comment>
<comment type="sequence caution" evidence="3">
    <conflict type="erroneous initiation">
        <sequence resource="EMBL-CDS" id="AAA16744"/>
    </conflict>
    <text>Extended N-terminus.</text>
</comment>
<feature type="chain" id="PRO_0000116008" description="Nuclear egress protein 1">
    <location>
        <begin position="1"/>
        <end position="264"/>
    </location>
</feature>
<feature type="zinc finger region" description="CCCH-type" evidence="1">
    <location>
        <begin position="83"/>
        <end position="187"/>
    </location>
</feature>
<feature type="region of interest" description="Disordered" evidence="2">
    <location>
        <begin position="1"/>
        <end position="22"/>
    </location>
</feature>
<feature type="compositionally biased region" description="Basic residues" evidence="2">
    <location>
        <begin position="1"/>
        <end position="12"/>
    </location>
</feature>
<evidence type="ECO:0000255" key="1">
    <source>
        <dbReference type="HAMAP-Rule" id="MF_04023"/>
    </source>
</evidence>
<evidence type="ECO:0000256" key="2">
    <source>
        <dbReference type="SAM" id="MobiDB-lite"/>
    </source>
</evidence>
<evidence type="ECO:0000305" key="3"/>
<dbReference type="EMBL" id="L25528">
    <property type="protein sequence ID" value="AAA16744.1"/>
    <property type="status" value="ALT_INIT"/>
    <property type="molecule type" value="Genomic_DNA"/>
</dbReference>
<dbReference type="EMBL" id="M63804">
    <property type="protein sequence ID" value="AAA74630.1"/>
    <property type="molecule type" value="Genomic_DNA"/>
</dbReference>
<dbReference type="EMBL" id="X83413">
    <property type="protein sequence ID" value="CAA58417.1"/>
    <property type="molecule type" value="Genomic_DNA"/>
</dbReference>
<dbReference type="PIR" id="T09331">
    <property type="entry name" value="QQBE6S"/>
</dbReference>
<dbReference type="RefSeq" id="NP_042930.1">
    <property type="nucleotide sequence ID" value="NC_001664.2"/>
</dbReference>
<dbReference type="SMR" id="P28865"/>
<dbReference type="DNASU" id="1487915"/>
<dbReference type="GeneID" id="1487915"/>
<dbReference type="KEGG" id="vg:1487915"/>
<dbReference type="Proteomes" id="UP000009295">
    <property type="component" value="Segment"/>
</dbReference>
<dbReference type="GO" id="GO:0044201">
    <property type="term" value="C:host cell nuclear inner membrane"/>
    <property type="evidence" value="ECO:0007669"/>
    <property type="project" value="UniProtKB-SubCell"/>
</dbReference>
<dbReference type="GO" id="GO:0016020">
    <property type="term" value="C:membrane"/>
    <property type="evidence" value="ECO:0007669"/>
    <property type="project" value="UniProtKB-KW"/>
</dbReference>
<dbReference type="GO" id="GO:0008270">
    <property type="term" value="F:zinc ion binding"/>
    <property type="evidence" value="ECO:0007669"/>
    <property type="project" value="UniProtKB-KW"/>
</dbReference>
<dbReference type="GO" id="GO:0046765">
    <property type="term" value="P:viral budding from nuclear membrane"/>
    <property type="evidence" value="ECO:0007669"/>
    <property type="project" value="InterPro"/>
</dbReference>
<dbReference type="HAMAP" id="MF_04023">
    <property type="entry name" value="HSV_NEC1"/>
    <property type="match status" value="1"/>
</dbReference>
<dbReference type="InterPro" id="IPR021152">
    <property type="entry name" value="Herpes_UL31"/>
</dbReference>
<dbReference type="Pfam" id="PF02718">
    <property type="entry name" value="Herpes_UL31"/>
    <property type="match status" value="1"/>
</dbReference>
<proteinExistence type="inferred from homology"/>
<organism>
    <name type="scientific">Human herpesvirus 6A (strain Uganda-1102)</name>
    <name type="common">HHV-6 variant A</name>
    <name type="synonym">Human B lymphotropic virus</name>
    <dbReference type="NCBI Taxonomy" id="10370"/>
    <lineage>
        <taxon>Viruses</taxon>
        <taxon>Duplodnaviria</taxon>
        <taxon>Heunggongvirae</taxon>
        <taxon>Peploviricota</taxon>
        <taxon>Herviviricetes</taxon>
        <taxon>Herpesvirales</taxon>
        <taxon>Orthoherpesviridae</taxon>
        <taxon>Betaherpesvirinae</taxon>
        <taxon>Roseolovirus</taxon>
        <taxon>Roseolovirus humanbeta6a</taxon>
        <taxon>Human betaherpesvirus 6A</taxon>
    </lineage>
</organism>
<keyword id="KW-1043">Host membrane</keyword>
<keyword id="KW-1048">Host nucleus</keyword>
<keyword id="KW-0472">Membrane</keyword>
<keyword id="KW-0479">Metal-binding</keyword>
<keyword id="KW-0597">Phosphoprotein</keyword>
<keyword id="KW-1185">Reference proteome</keyword>
<keyword id="KW-0862">Zinc</keyword>
<keyword id="KW-0863">Zinc-finger</keyword>
<name>NEC1_HHV6U</name>
<reference key="1">
    <citation type="journal article" date="1994" name="J. Virol.">
        <title>Nucleotide sequence analysis of a 38.5-kilobase-pair region of the genome of human herpesvirus 6 encoding human cytomegalovirus immediate-early gene homologs and transactivating functions.</title>
        <authorList>
            <person name="Nicholas J."/>
            <person name="Martin M.E.D."/>
        </authorList>
    </citation>
    <scope>NUCLEOTIDE SEQUENCE [GENOMIC DNA]</scope>
</reference>
<reference key="2">
    <citation type="journal article" date="1995" name="Virology">
        <title>The DNA sequence of human herpesvirus-6: structure, coding content, and genome evolution.</title>
        <authorList>
            <person name="Gompels U.A."/>
            <person name="Nicholas J."/>
            <person name="Lawrence G.L."/>
            <person name="Jones M."/>
            <person name="Thomson B.J."/>
            <person name="Martin M.E.D."/>
            <person name="Efstathiou S."/>
            <person name="Craxton M.A."/>
            <person name="Macaulay H.A."/>
        </authorList>
    </citation>
    <scope>NUCLEOTIDE SEQUENCE [LARGE SCALE GENOMIC DNA]</scope>
</reference>
<reference key="3">
    <citation type="journal article" date="1991" name="J. Virol.">
        <title>Characterization of the DNA polymerase gene of human herpesvirus 6.</title>
        <authorList>
            <person name="Teo I.A."/>
            <person name="Griffin B.E."/>
            <person name="Jones M.D."/>
        </authorList>
    </citation>
    <scope>NUCLEOTIDE SEQUENCE [GENOMIC DNA] OF 85-264</scope>
</reference>
<sequence length="264" mass="30845">MTVHKSRIRRSRSLSVTHRIQKRPDHREKTKLYLQLKLHDLHTVFNLFPEYEQKFLAIIKLPITGKEPIDVPFSLSNHHQHTCLEFSPYANEQISKSACLHCESVSVPTSSDAMVAHLNQVNNVMQNRLYFYGFRKDMELIRMSAKQPTIFQIFYIVHNTINNIFPIMFERKQKLGMHIVFQSRTLHIPCECIKQIVAVSSGYNVYLDILQESVILTVLCETLDTNTNIHIDIGMLQKKLEEMDIPNEISDRLEKYKGHLIGFH</sequence>
<protein>
    <recommendedName>
        <fullName evidence="1">Nuclear egress protein 1</fullName>
    </recommendedName>
</protein>
<gene>
    <name evidence="1" type="primary">NEC1</name>
    <name type="ordered locus">U37</name>
    <name type="ordered locus">XIRF2</name>
</gene>
<organismHost>
    <name type="scientific">Homo sapiens</name>
    <name type="common">Human</name>
    <dbReference type="NCBI Taxonomy" id="9606"/>
</organismHost>